<accession>B5RPV6</accession>
<proteinExistence type="inferred from homology"/>
<feature type="chain" id="PRO_1000115505" description="Trigger factor">
    <location>
        <begin position="1"/>
        <end position="448"/>
    </location>
</feature>
<feature type="domain" description="PPIase FKBP-type" evidence="1">
    <location>
        <begin position="167"/>
        <end position="253"/>
    </location>
</feature>
<dbReference type="EC" id="5.2.1.8" evidence="1"/>
<dbReference type="EMBL" id="CP000993">
    <property type="protein sequence ID" value="ACH94840.1"/>
    <property type="molecule type" value="Genomic_DNA"/>
</dbReference>
<dbReference type="RefSeq" id="WP_012539032.1">
    <property type="nucleotide sequence ID" value="NC_011244.1"/>
</dbReference>
<dbReference type="SMR" id="B5RPV6"/>
<dbReference type="KEGG" id="bre:BRE_616"/>
<dbReference type="HOGENOM" id="CLU_033058_3_2_12"/>
<dbReference type="Proteomes" id="UP000000612">
    <property type="component" value="Chromosome"/>
</dbReference>
<dbReference type="GO" id="GO:0005737">
    <property type="term" value="C:cytoplasm"/>
    <property type="evidence" value="ECO:0007669"/>
    <property type="project" value="UniProtKB-SubCell"/>
</dbReference>
<dbReference type="GO" id="GO:0003755">
    <property type="term" value="F:peptidyl-prolyl cis-trans isomerase activity"/>
    <property type="evidence" value="ECO:0007669"/>
    <property type="project" value="UniProtKB-UniRule"/>
</dbReference>
<dbReference type="GO" id="GO:0051301">
    <property type="term" value="P:cell division"/>
    <property type="evidence" value="ECO:0007669"/>
    <property type="project" value="UniProtKB-KW"/>
</dbReference>
<dbReference type="GO" id="GO:0006457">
    <property type="term" value="P:protein folding"/>
    <property type="evidence" value="ECO:0007669"/>
    <property type="project" value="UniProtKB-UniRule"/>
</dbReference>
<dbReference type="GO" id="GO:0015031">
    <property type="term" value="P:protein transport"/>
    <property type="evidence" value="ECO:0007669"/>
    <property type="project" value="UniProtKB-UniRule"/>
</dbReference>
<dbReference type="Gene3D" id="3.10.50.40">
    <property type="match status" value="1"/>
</dbReference>
<dbReference type="Gene3D" id="3.30.70.1050">
    <property type="entry name" value="Trigger factor ribosome-binding domain"/>
    <property type="match status" value="1"/>
</dbReference>
<dbReference type="Gene3D" id="1.10.3120.10">
    <property type="entry name" value="Trigger factor, C-terminal domain"/>
    <property type="match status" value="1"/>
</dbReference>
<dbReference type="HAMAP" id="MF_00303">
    <property type="entry name" value="Trigger_factor_Tig"/>
    <property type="match status" value="1"/>
</dbReference>
<dbReference type="InterPro" id="IPR046357">
    <property type="entry name" value="PPIase_dom_sf"/>
</dbReference>
<dbReference type="InterPro" id="IPR005215">
    <property type="entry name" value="Trig_fac"/>
</dbReference>
<dbReference type="InterPro" id="IPR008880">
    <property type="entry name" value="Trigger_fac_C"/>
</dbReference>
<dbReference type="InterPro" id="IPR037041">
    <property type="entry name" value="Trigger_fac_C_sf"/>
</dbReference>
<dbReference type="InterPro" id="IPR008881">
    <property type="entry name" value="Trigger_fac_ribosome-bd_bac"/>
</dbReference>
<dbReference type="InterPro" id="IPR036611">
    <property type="entry name" value="Trigger_fac_ribosome-bd_sf"/>
</dbReference>
<dbReference type="InterPro" id="IPR027304">
    <property type="entry name" value="Trigger_fact/SurA_dom_sf"/>
</dbReference>
<dbReference type="NCBIfam" id="TIGR00115">
    <property type="entry name" value="tig"/>
    <property type="match status" value="1"/>
</dbReference>
<dbReference type="Pfam" id="PF05698">
    <property type="entry name" value="Trigger_C"/>
    <property type="match status" value="1"/>
</dbReference>
<dbReference type="Pfam" id="PF05697">
    <property type="entry name" value="Trigger_N"/>
    <property type="match status" value="1"/>
</dbReference>
<dbReference type="PIRSF" id="PIRSF003095">
    <property type="entry name" value="Trigger_factor"/>
    <property type="match status" value="1"/>
</dbReference>
<dbReference type="SUPFAM" id="SSF54534">
    <property type="entry name" value="FKBP-like"/>
    <property type="match status" value="1"/>
</dbReference>
<dbReference type="SUPFAM" id="SSF109998">
    <property type="entry name" value="Triger factor/SurA peptide-binding domain-like"/>
    <property type="match status" value="1"/>
</dbReference>
<dbReference type="SUPFAM" id="SSF102735">
    <property type="entry name" value="Trigger factor ribosome-binding domain"/>
    <property type="match status" value="1"/>
</dbReference>
<gene>
    <name evidence="1" type="primary">tig</name>
    <name type="ordered locus">BRE_616</name>
</gene>
<protein>
    <recommendedName>
        <fullName evidence="1">Trigger factor</fullName>
        <shortName evidence="1">TF</shortName>
        <ecNumber evidence="1">5.2.1.8</ecNumber>
    </recommendedName>
    <alternativeName>
        <fullName evidence="1">PPIase</fullName>
    </alternativeName>
</protein>
<name>TIG_BORRA</name>
<organism>
    <name type="scientific">Borrelia recurrentis (strain A1)</name>
    <dbReference type="NCBI Taxonomy" id="412418"/>
    <lineage>
        <taxon>Bacteria</taxon>
        <taxon>Pseudomonadati</taxon>
        <taxon>Spirochaetota</taxon>
        <taxon>Spirochaetia</taxon>
        <taxon>Spirochaetales</taxon>
        <taxon>Borreliaceae</taxon>
        <taxon>Borrelia</taxon>
    </lineage>
</organism>
<evidence type="ECO:0000255" key="1">
    <source>
        <dbReference type="HAMAP-Rule" id="MF_00303"/>
    </source>
</evidence>
<sequence>MILTSNVKLMPGSKVEAVIQISKEFVKAKYNEILKDYSSRLKVKGFRTGRVPFSIIEGKYSDNIRALAIENLIHKSLEEFFESAIYKPLSYAVPKILDEKLEINFDKDFEFTFVYESYPEFEISDISNFKVEIPEVVISDSDIEDELKLLQFENSIIVEDNGSVKVGSIVRVDFVELDDSLNEILATKRQDFVLTVGESDDYYGFGYDIIGMKKDEEKIVEKNYGSDYKFSELANTSKRLKIGVKDIKRRDIPELDDAFAKDVKDSLNTLEDLRDYVRENMLRVVQEKTNSLKLSKLLSGIAEKVNIDVPSSMFEAELKNVINEFSHQNKINITQLQNSSTGLEGVNDVFKENVLNKLKSKLVFQKMVDNDSSEVTELDLENELIKQAQNLKMAPQDVKKFYKERNLFGLLKDEIKRQKVKEKILQDLEEIKLEKVSFRDFVNYKTGE</sequence>
<comment type="function">
    <text evidence="1">Involved in protein export. Acts as a chaperone by maintaining the newly synthesized protein in an open conformation. Functions as a peptidyl-prolyl cis-trans isomerase.</text>
</comment>
<comment type="catalytic activity">
    <reaction evidence="1">
        <text>[protein]-peptidylproline (omega=180) = [protein]-peptidylproline (omega=0)</text>
        <dbReference type="Rhea" id="RHEA:16237"/>
        <dbReference type="Rhea" id="RHEA-COMP:10747"/>
        <dbReference type="Rhea" id="RHEA-COMP:10748"/>
        <dbReference type="ChEBI" id="CHEBI:83833"/>
        <dbReference type="ChEBI" id="CHEBI:83834"/>
        <dbReference type="EC" id="5.2.1.8"/>
    </reaction>
</comment>
<comment type="subcellular location">
    <subcellularLocation>
        <location>Cytoplasm</location>
    </subcellularLocation>
    <text evidence="1">About half TF is bound to the ribosome near the polypeptide exit tunnel while the other half is free in the cytoplasm.</text>
</comment>
<comment type="domain">
    <text evidence="1">Consists of 3 domains; the N-terminus binds the ribosome, the middle domain has PPIase activity, while the C-terminus has intrinsic chaperone activity on its own.</text>
</comment>
<comment type="similarity">
    <text evidence="1">Belongs to the FKBP-type PPIase family. Tig subfamily.</text>
</comment>
<keyword id="KW-0131">Cell cycle</keyword>
<keyword id="KW-0132">Cell division</keyword>
<keyword id="KW-0143">Chaperone</keyword>
<keyword id="KW-0963">Cytoplasm</keyword>
<keyword id="KW-0413">Isomerase</keyword>
<keyword id="KW-0697">Rotamase</keyword>
<reference key="1">
    <citation type="journal article" date="2008" name="PLoS Genet.">
        <title>The genome of Borrelia recurrentis, the agent of deadly louse-borne relapsing fever, is a degraded subset of tick-borne Borrelia duttonii.</title>
        <authorList>
            <person name="Lescot M."/>
            <person name="Audic S."/>
            <person name="Robert C."/>
            <person name="Nguyen T.T."/>
            <person name="Blanc G."/>
            <person name="Cutler S.J."/>
            <person name="Wincker P."/>
            <person name="Couloux A."/>
            <person name="Claverie J.-M."/>
            <person name="Raoult D."/>
            <person name="Drancourt M."/>
        </authorList>
    </citation>
    <scope>NUCLEOTIDE SEQUENCE [LARGE SCALE GENOMIC DNA]</scope>
    <source>
        <strain>A1</strain>
    </source>
</reference>